<sequence>MTDLSEKVRAWGRRLVVGAAAAATLPGLIGIAGGAATANAFSRPGLPVEYLQVPSAGMGRDIKVQFQSGGNGSPAVYLLDGLRAQDDYNGWDINTPAFEWYYQSGLSVIMPVGGQSSFYADWYQPACGKAGCSTYKWETFLTSELPQYLASNKGVKSTGSAAVGISMSGSSAMILAVNHPNQFVYAGSLSALLDPSQGMGPSLIGLAMGDAGGYKADAMWGPSSDPAWQRNDPSLQIPALVGNNTRLWVYCGNGTPSELGGANMPAEFLENFVRSSNLKFQDAYNAAGGHNAVFNFNANGTHSWEYWGAQLNAMKPDLQSALGASSGGGG</sequence>
<evidence type="ECO:0000250" key="1"/>
<evidence type="ECO:0000305" key="2"/>
<organism>
    <name type="scientific">Mycobacterium intracellulare (strain ATCC 13950 / DSM 43223 / JCM 6384 / NCTC 13025 / 3600)</name>
    <dbReference type="NCBI Taxonomy" id="487521"/>
    <lineage>
        <taxon>Bacteria</taxon>
        <taxon>Bacillati</taxon>
        <taxon>Actinomycetota</taxon>
        <taxon>Actinomycetes</taxon>
        <taxon>Mycobacteriales</taxon>
        <taxon>Mycobacteriaceae</taxon>
        <taxon>Mycobacterium</taxon>
        <taxon>Mycobacterium avium complex (MAC)</taxon>
    </lineage>
</organism>
<accession>Q49575</accession>
<accession>H8IM05</accession>
<accession>P94938</accession>
<dbReference type="EC" id="2.3.1.122"/>
<dbReference type="EC" id="2.3.1.20"/>
<dbReference type="EMBL" id="D16546">
    <property type="protein sequence ID" value="BAA03981.1"/>
    <property type="molecule type" value="Genomic_DNA"/>
</dbReference>
<dbReference type="EMBL" id="D14253">
    <property type="protein sequence ID" value="BAA03243.1"/>
    <property type="molecule type" value="Genomic_DNA"/>
</dbReference>
<dbReference type="EMBL" id="CP003322">
    <property type="protein sequence ID" value="AFC43854.1"/>
    <property type="status" value="ALT_INIT"/>
    <property type="molecule type" value="Genomic_DNA"/>
</dbReference>
<dbReference type="PIR" id="JN0897">
    <property type="entry name" value="JN0897"/>
</dbReference>
<dbReference type="RefSeq" id="WP_009952996.1">
    <property type="nucleotide sequence ID" value="NZ_CP076382.2"/>
</dbReference>
<dbReference type="SMR" id="Q49575"/>
<dbReference type="ESTHER" id="mycit-a85b">
    <property type="family name" value="A85-Mycolyl-transferase"/>
</dbReference>
<dbReference type="GeneID" id="77301846"/>
<dbReference type="KEGG" id="mia:OCU_26350"/>
<dbReference type="PATRIC" id="fig|487521.10.peg.2648"/>
<dbReference type="eggNOG" id="COG0627">
    <property type="taxonomic scope" value="Bacteria"/>
</dbReference>
<dbReference type="HOGENOM" id="CLU_026624_3_1_11"/>
<dbReference type="Proteomes" id="UP000008004">
    <property type="component" value="Chromosome"/>
</dbReference>
<dbReference type="GO" id="GO:0005576">
    <property type="term" value="C:extracellular region"/>
    <property type="evidence" value="ECO:0007669"/>
    <property type="project" value="UniProtKB-SubCell"/>
</dbReference>
<dbReference type="GO" id="GO:0004144">
    <property type="term" value="F:diacylglycerol O-acyltransferase activity"/>
    <property type="evidence" value="ECO:0007669"/>
    <property type="project" value="UniProtKB-EC"/>
</dbReference>
<dbReference type="GO" id="GO:0050348">
    <property type="term" value="F:trehalose O-mycolyltransferase activity"/>
    <property type="evidence" value="ECO:0007669"/>
    <property type="project" value="UniProtKB-EC"/>
</dbReference>
<dbReference type="FunFam" id="3.40.50.1820:FF:000086">
    <property type="entry name" value="Diacylglycerol acyltransferase/mycolyltransferase Ag85C"/>
    <property type="match status" value="1"/>
</dbReference>
<dbReference type="Gene3D" id="3.40.50.1820">
    <property type="entry name" value="alpha/beta hydrolase"/>
    <property type="match status" value="1"/>
</dbReference>
<dbReference type="InterPro" id="IPR029058">
    <property type="entry name" value="AB_hydrolase_fold"/>
</dbReference>
<dbReference type="InterPro" id="IPR000801">
    <property type="entry name" value="Esterase-like"/>
</dbReference>
<dbReference type="InterPro" id="IPR050583">
    <property type="entry name" value="Mycobacterial_A85_antigen"/>
</dbReference>
<dbReference type="PANTHER" id="PTHR48098:SF1">
    <property type="entry name" value="DIACYLGLYCEROL ACYLTRANSFERASE_MYCOLYLTRANSFERASE AG85A"/>
    <property type="match status" value="1"/>
</dbReference>
<dbReference type="PANTHER" id="PTHR48098">
    <property type="entry name" value="ENTEROCHELIN ESTERASE-RELATED"/>
    <property type="match status" value="1"/>
</dbReference>
<dbReference type="Pfam" id="PF00756">
    <property type="entry name" value="Esterase"/>
    <property type="match status" value="1"/>
</dbReference>
<dbReference type="SUPFAM" id="SSF53474">
    <property type="entry name" value="alpha/beta-Hydrolases"/>
    <property type="match status" value="1"/>
</dbReference>
<feature type="signal peptide" evidence="1">
    <location>
        <begin position="1"/>
        <end position="40"/>
    </location>
</feature>
<feature type="chain" id="PRO_0000000218" description="Diacylglycerol acyltransferase/mycolyltransferase Ag85B">
    <location>
        <begin position="41"/>
        <end position="330"/>
    </location>
</feature>
<feature type="region of interest" description="Fibronectin-binding">
    <location>
        <begin position="98"/>
        <end position="108"/>
    </location>
</feature>
<feature type="active site" description="Nucleophile" evidence="1">
    <location>
        <position position="166"/>
    </location>
</feature>
<feature type="active site" evidence="1">
    <location>
        <position position="270"/>
    </location>
</feature>
<feature type="active site" evidence="1">
    <location>
        <position position="302"/>
    </location>
</feature>
<feature type="binding site" evidence="1">
    <location>
        <begin position="82"/>
        <end position="83"/>
    </location>
    <ligand>
        <name>substrate</name>
    </ligand>
</feature>
<feature type="binding site" evidence="1">
    <location>
        <position position="166"/>
    </location>
    <ligand>
        <name>substrate</name>
    </ligand>
</feature>
<feature type="binding site" evidence="1">
    <location>
        <position position="194"/>
    </location>
    <ligand>
        <name>substrate</name>
    </ligand>
</feature>
<feature type="binding site" evidence="1">
    <location>
        <begin position="272"/>
        <end position="275"/>
    </location>
    <ligand>
        <name>substrate</name>
    </ligand>
</feature>
<feature type="binding site" evidence="1">
    <location>
        <position position="279"/>
    </location>
    <ligand>
        <name>substrate</name>
    </ligand>
</feature>
<feature type="binding site" evidence="1">
    <location>
        <begin position="302"/>
        <end position="304"/>
    </location>
    <ligand>
        <name>substrate</name>
    </ligand>
</feature>
<feature type="disulfide bond" evidence="1">
    <location>
        <begin position="127"/>
        <end position="132"/>
    </location>
</feature>
<feature type="sequence conflict" description="In Ref. 1; BAA03243." evidence="2" ref="1">
    <original>PV</original>
    <variation>EF</variation>
    <location>
        <begin position="47"/>
        <end position="48"/>
    </location>
</feature>
<feature type="sequence conflict" description="In Ref. 1; BAA03243/BAA03981." evidence="2" ref="1">
    <original>E</original>
    <variation>D</variation>
    <location>
        <position position="138"/>
    </location>
</feature>
<feature type="sequence conflict" description="In Ref. 1; BAA03243." evidence="2" ref="1">
    <original>Q</original>
    <variation>S</variation>
    <location>
        <position position="310"/>
    </location>
</feature>
<name>A85B_MYCIA</name>
<proteinExistence type="inferred from homology"/>
<comment type="function">
    <text evidence="1">The antigen 85 proteins (FbpA, FbpB, FbpC) are responsible for the high affinity of mycobacteria for fibronectin, a large adhesive glycoprotein, which facilitates the attachment of M.tuberculosis to murine alveolar macrophages (AMs). They also help to maintain the integrity of the cell wall by catalyzing the transfer of mycolic acids to cell wall arabinogalactan and through the synthesis of alpha,alpha-trehalose dimycolate (TDM, cord factor). They catalyze the transfer of a mycoloyl residue from one molecule of alpha,alpha-trehalose monomycolate (TMM) to another TMM, leading to the formation of TDM (By similarity).</text>
</comment>
<comment type="catalytic activity">
    <reaction>
        <text>2 alpha,alpha'-trehalose 6-mycolate = alpha,alpha'-trehalose 6,6'-bismycolate + alpha,alpha-trehalose</text>
        <dbReference type="Rhea" id="RHEA:23472"/>
        <dbReference type="ChEBI" id="CHEBI:16551"/>
        <dbReference type="ChEBI" id="CHEBI:18195"/>
        <dbReference type="ChEBI" id="CHEBI:18234"/>
        <dbReference type="EC" id="2.3.1.122"/>
    </reaction>
</comment>
<comment type="catalytic activity">
    <reaction>
        <text>an acyl-CoA + a 1,2-diacyl-sn-glycerol = a triacyl-sn-glycerol + CoA</text>
        <dbReference type="Rhea" id="RHEA:10868"/>
        <dbReference type="ChEBI" id="CHEBI:17815"/>
        <dbReference type="ChEBI" id="CHEBI:57287"/>
        <dbReference type="ChEBI" id="CHEBI:58342"/>
        <dbReference type="ChEBI" id="CHEBI:64615"/>
        <dbReference type="EC" id="2.3.1.20"/>
    </reaction>
</comment>
<comment type="subcellular location">
    <subcellularLocation>
        <location evidence="1">Secreted</location>
    </subcellularLocation>
</comment>
<comment type="similarity">
    <text evidence="2">Belongs to the mycobacterial A85 antigen family.</text>
</comment>
<comment type="sequence caution" evidence="2">
    <conflict type="erroneous initiation">
        <sequence resource="EMBL-CDS" id="AFC43854"/>
    </conflict>
    <text>Truncated N-terminus.</text>
</comment>
<keyword id="KW-0012">Acyltransferase</keyword>
<keyword id="KW-1015">Disulfide bond</keyword>
<keyword id="KW-0964">Secreted</keyword>
<keyword id="KW-0732">Signal</keyword>
<keyword id="KW-0808">Transferase</keyword>
<reference key="1">
    <citation type="journal article" date="1993" name="Biochem. Biophys. Res. Commun.">
        <title>Cloning, sequencing and expression of the gene for alpha antigen from Mycobacterium intracellulare and use of PCR for the rapid identification of Mycobacterium intracellulare.</title>
        <authorList>
            <person name="Kitaura H."/>
            <person name="Ohara N."/>
            <person name="Matsuo T."/>
            <person name="Tasaka H."/>
            <person name="Kobayashi K."/>
            <person name="Yamada T."/>
        </authorList>
    </citation>
    <scope>NUCLEOTIDE SEQUENCE [GENOMIC DNA]</scope>
    <source>
        <strain>ATCC 13950 / DSM 43223 / JCM 6384 / NCTC 13025 / 3600</strain>
    </source>
</reference>
<reference key="2">
    <citation type="journal article" date="2012" name="J. Bacteriol.">
        <title>Complete genome sequence of Mycobacterium intracellulare strain ATCC 13950T.</title>
        <authorList>
            <person name="Kim B.J."/>
            <person name="Choi B.S."/>
            <person name="Lim J.S."/>
            <person name="Choi I.Y."/>
            <person name="Lee J.H."/>
            <person name="Chun J."/>
            <person name="Kook Y.H."/>
            <person name="Kim B.J."/>
        </authorList>
    </citation>
    <scope>NUCLEOTIDE SEQUENCE [LARGE SCALE GENOMIC DNA]</scope>
    <source>
        <strain>ATCC 13950 / DSM 43223 / JCM 6384 / NCTC 13025 / 3600</strain>
    </source>
</reference>
<protein>
    <recommendedName>
        <fullName>Diacylglycerol acyltransferase/mycolyltransferase Ag85B</fullName>
        <shortName>DGAT</shortName>
        <ecNumber>2.3.1.122</ecNumber>
        <ecNumber>2.3.1.20</ecNumber>
    </recommendedName>
    <alternativeName>
        <fullName>30 kDa extracellular protein</fullName>
    </alternativeName>
    <alternativeName>
        <fullName>Acyl-CoA:diacylglycerol acyltransferase</fullName>
    </alternativeName>
    <alternativeName>
        <fullName>Antigen 85 complex B</fullName>
        <shortName>85B</shortName>
        <shortName>Ag85B</shortName>
    </alternativeName>
    <alternativeName>
        <fullName>Extracellular alpha-antigen</fullName>
    </alternativeName>
    <alternativeName>
        <fullName>Fibronectin-binding protein B</fullName>
        <shortName>Fbps B</shortName>
    </alternativeName>
</protein>
<gene>
    <name type="primary">fbpB</name>
    <name type="ordered locus">OCU_26350</name>
</gene>